<reference key="1">
    <citation type="submission" date="2004-11" db="EMBL/GenBank/DDBJ databases">
        <authorList>
            <consortium name="The German cDNA consortium"/>
        </authorList>
    </citation>
    <scope>NUCLEOTIDE SEQUENCE [LARGE SCALE MRNA]</scope>
    <source>
        <tissue>Kidney</tissue>
    </source>
</reference>
<accession>Q5R9I1</accession>
<gene>
    <name type="primary">MTUS1</name>
</gene>
<name>MTUS1_PONAB</name>
<proteinExistence type="evidence at transcript level"/>
<sequence length="1270" mass="141576">MTDDNSDDKIEDELQTFFTSDKDGNTHAYNPKSPPTQKSSASSVNWNSANPDDMVVDYETDPAVVTGENISLSLQGVEVFDHEKSSSDFTSKQVLDMHKDSICQSPALVGTEKPKYLQHSCHSLEAVEVQSVEPSLPFVWKPNDNLNCTGYSDALELNQTFDMTVDKVNCTFISHHAIRKSQSFHTAGSLPPTGRRSGNTSSLSYSTWTSSHSDKMHARETTYDRESFENPQVTPSEAQDTTYTAFSDVVMQSEVFVSDIGNQCPCSSGKVTSEYTDGSQQRLVGEKETQALTPVSDGMEVPNDSALQEFFCLSHDESNSEPHSQSSYRHKEMGQNLRETVSYCLVDDERPLMVPAFDKSEAQVLNPEHKVTETEDTQMVTKGKDSGTQNHTSELILSSPPGQKVGSSFGLTWDANDMVISTDNTMCMSTPVLEPTKVTFSVSPIEATEKCKKVEKGNRGLKNISNSKEAPVNLCKPSLGKSTTKTNTPIGCKVRKTEIISYPRPNFRNVKAKVMSRPVLQSKDAALSKVTPRPQLTSASSPSSAISRQPTVLSRTPRSDLNADKKAEILINKTHKQQFNKLITSQAVHVTTHSKNASHRVPRTTSAVKSNQEDVDKASSSNSACETGSVSALFQKIKGILPVKMESAECLEMTYVPNIDRISPEKKGEKENGTSMEKQELKQEIMNETFEYGSLFLGSASKTTTTSGRNISKPDSCGLRQIAAPKAKVGPPVSCLRRNSDNRNPSADRAVSPQRIRRVSSSGKPTSLKTAQSSWVNLPRPLPKSKASLKSPALRRTGSTPSIASTHSELSTYSNNSGNATVIKYEEKPPKPAFQNGSSGSFYLKPLVSRAHVHLLKTPPKGPSRKNLFTALNAVEKSRQKNPRSLCIQTQTAPDVLPPEKTLELTQYKTKCENQSGFILQLKQLLACGNTKSEALTVVIQHLLSEREEALKQHKTLSQELVNLRGELVTASTTCEKLEEARNELQTAYEAFVQQHQAEKTERENRLKEFYTREYEKLRDTYIEEAEKYKMQLQEQFDNLNAAHETSKLEIEASHSEKVELLKKAYEASLSEIKKGHEMEKKSLEDLLSEKQESLEKQISDLKSENDALNEKLKSEEQKRRAREKANLKNPQIMYLEQELESLKAVLEIKNEKLHQQDIKLMKMEKLVDNNTALVDKLKRFQQENEELKARMDKHMAISRQLSTEQAVLQESLEKESKVNKRLSMENEELLWKLHNGDLCSPKRSPTSSAIPFQSPRNSGSFPSPSISPR</sequence>
<comment type="function">
    <text evidence="1">Cooperates with AGTR2 to inhibit ERK2 activation and cell proliferation. May be required for AGTR2 cell surface expression. Together with PTPN6, induces UBE2V2 expression upon angiotensin-II stimulation (By similarity).</text>
</comment>
<comment type="subunit">
    <text evidence="1">Homodimer. Interacts with AGTR2. Interacts with PTPN6. Associates with microtubules (By similarity).</text>
</comment>
<comment type="subcellular location">
    <subcellularLocation>
        <location evidence="1">Mitochondrion</location>
    </subcellularLocation>
    <subcellularLocation>
        <location evidence="1">Golgi apparatus</location>
    </subcellularLocation>
    <subcellularLocation>
        <location evidence="1">Cell membrane</location>
    </subcellularLocation>
    <subcellularLocation>
        <location evidence="1">Nucleus</location>
    </subcellularLocation>
    <text evidence="1">In neurons, translocates into the nucleus after treatment with angiotensin-II. Localizes with the mitotic spindle during mitosis and with the intercellular bridge during cytokinesis.</text>
</comment>
<comment type="similarity">
    <text evidence="7">Belongs to the MTUS1 family.</text>
</comment>
<keyword id="KW-0131">Cell cycle</keyword>
<keyword id="KW-1003">Cell membrane</keyword>
<keyword id="KW-0175">Coiled coil</keyword>
<keyword id="KW-0333">Golgi apparatus</keyword>
<keyword id="KW-0472">Membrane</keyword>
<keyword id="KW-0496">Mitochondrion</keyword>
<keyword id="KW-0539">Nucleus</keyword>
<keyword id="KW-0597">Phosphoprotein</keyword>
<keyword id="KW-1185">Reference proteome</keyword>
<organism>
    <name type="scientific">Pongo abelii</name>
    <name type="common">Sumatran orangutan</name>
    <name type="synonym">Pongo pygmaeus abelii</name>
    <dbReference type="NCBI Taxonomy" id="9601"/>
    <lineage>
        <taxon>Eukaryota</taxon>
        <taxon>Metazoa</taxon>
        <taxon>Chordata</taxon>
        <taxon>Craniata</taxon>
        <taxon>Vertebrata</taxon>
        <taxon>Euteleostomi</taxon>
        <taxon>Mammalia</taxon>
        <taxon>Eutheria</taxon>
        <taxon>Euarchontoglires</taxon>
        <taxon>Primates</taxon>
        <taxon>Haplorrhini</taxon>
        <taxon>Catarrhini</taxon>
        <taxon>Hominidae</taxon>
        <taxon>Pongo</taxon>
    </lineage>
</organism>
<evidence type="ECO:0000250" key="1"/>
<evidence type="ECO:0000250" key="2">
    <source>
        <dbReference type="UniProtKB" id="Q5HZI1"/>
    </source>
</evidence>
<evidence type="ECO:0000250" key="3">
    <source>
        <dbReference type="UniProtKB" id="Q6IMY1"/>
    </source>
</evidence>
<evidence type="ECO:0000250" key="4">
    <source>
        <dbReference type="UniProtKB" id="Q9ULD2"/>
    </source>
</evidence>
<evidence type="ECO:0000255" key="5"/>
<evidence type="ECO:0000256" key="6">
    <source>
        <dbReference type="SAM" id="MobiDB-lite"/>
    </source>
</evidence>
<evidence type="ECO:0000305" key="7"/>
<protein>
    <recommendedName>
        <fullName>Microtubule-associated tumor suppressor 1 homolog</fullName>
    </recommendedName>
    <alternativeName>
        <fullName>Mitochondrial tumor suppressor 1 homolog</fullName>
    </alternativeName>
</protein>
<dbReference type="EMBL" id="CR859407">
    <property type="protein sequence ID" value="CAH91579.1"/>
    <property type="molecule type" value="mRNA"/>
</dbReference>
<dbReference type="RefSeq" id="NP_001125928.1">
    <property type="nucleotide sequence ID" value="NM_001132456.1"/>
</dbReference>
<dbReference type="SMR" id="Q5R9I1"/>
<dbReference type="FunCoup" id="Q5R9I1">
    <property type="interactions" value="1452"/>
</dbReference>
<dbReference type="STRING" id="9601.ENSPPYP00000020603"/>
<dbReference type="GeneID" id="100172862"/>
<dbReference type="KEGG" id="pon:100172862"/>
<dbReference type="CTD" id="57509"/>
<dbReference type="eggNOG" id="ENOG502QPVG">
    <property type="taxonomic scope" value="Eukaryota"/>
</dbReference>
<dbReference type="InParanoid" id="Q5R9I1"/>
<dbReference type="OrthoDB" id="10038993at2759"/>
<dbReference type="Proteomes" id="UP000001595">
    <property type="component" value="Unplaced"/>
</dbReference>
<dbReference type="GO" id="GO:0005794">
    <property type="term" value="C:Golgi apparatus"/>
    <property type="evidence" value="ECO:0007669"/>
    <property type="project" value="UniProtKB-SubCell"/>
</dbReference>
<dbReference type="GO" id="GO:0005739">
    <property type="term" value="C:mitochondrion"/>
    <property type="evidence" value="ECO:0007669"/>
    <property type="project" value="UniProtKB-SubCell"/>
</dbReference>
<dbReference type="GO" id="GO:0005634">
    <property type="term" value="C:nucleus"/>
    <property type="evidence" value="ECO:0007669"/>
    <property type="project" value="UniProtKB-SubCell"/>
</dbReference>
<dbReference type="GO" id="GO:0005886">
    <property type="term" value="C:plasma membrane"/>
    <property type="evidence" value="ECO:0007669"/>
    <property type="project" value="UniProtKB-SubCell"/>
</dbReference>
<dbReference type="GO" id="GO:0008017">
    <property type="term" value="F:microtubule binding"/>
    <property type="evidence" value="ECO:0007669"/>
    <property type="project" value="TreeGrafter"/>
</dbReference>
<dbReference type="GO" id="GO:0010758">
    <property type="term" value="P:regulation of macrophage chemotaxis"/>
    <property type="evidence" value="ECO:0007669"/>
    <property type="project" value="TreeGrafter"/>
</dbReference>
<dbReference type="InterPro" id="IPR051293">
    <property type="entry name" value="MTUS1/CCDC69"/>
</dbReference>
<dbReference type="PANTHER" id="PTHR24200:SF7">
    <property type="entry name" value="MICROTUBULE-ASSOCIATED TUMOR SUPPRESSOR 1"/>
    <property type="match status" value="1"/>
</dbReference>
<dbReference type="PANTHER" id="PTHR24200">
    <property type="entry name" value="TOUCAN, ISOFORM A"/>
    <property type="match status" value="1"/>
</dbReference>
<feature type="chain" id="PRO_0000305199" description="Microtubule-associated tumor suppressor 1 homolog">
    <location>
        <begin position="1"/>
        <end position="1270"/>
    </location>
</feature>
<feature type="region of interest" description="Disordered" evidence="6">
    <location>
        <begin position="1"/>
        <end position="50"/>
    </location>
</feature>
<feature type="region of interest" description="Disordered" evidence="6">
    <location>
        <begin position="183"/>
        <end position="217"/>
    </location>
</feature>
<feature type="region of interest" description="Disordered" evidence="6">
    <location>
        <begin position="374"/>
        <end position="402"/>
    </location>
</feature>
<feature type="region of interest" description="Disordered" evidence="6">
    <location>
        <begin position="524"/>
        <end position="558"/>
    </location>
</feature>
<feature type="region of interest" description="Disordered" evidence="6">
    <location>
        <begin position="592"/>
        <end position="622"/>
    </location>
</feature>
<feature type="region of interest" description="Disordered" evidence="6">
    <location>
        <begin position="701"/>
        <end position="816"/>
    </location>
</feature>
<feature type="region of interest" description="Disordered" evidence="6">
    <location>
        <begin position="1237"/>
        <end position="1270"/>
    </location>
</feature>
<feature type="coiled-coil region" evidence="5">
    <location>
        <begin position="940"/>
        <end position="1231"/>
    </location>
</feature>
<feature type="compositionally biased region" description="Acidic residues" evidence="6">
    <location>
        <begin position="1"/>
        <end position="14"/>
    </location>
</feature>
<feature type="compositionally biased region" description="Low complexity" evidence="6">
    <location>
        <begin position="39"/>
        <end position="50"/>
    </location>
</feature>
<feature type="compositionally biased region" description="Low complexity" evidence="6">
    <location>
        <begin position="200"/>
        <end position="211"/>
    </location>
</feature>
<feature type="compositionally biased region" description="Polar residues" evidence="6">
    <location>
        <begin position="386"/>
        <end position="396"/>
    </location>
</feature>
<feature type="compositionally biased region" description="Low complexity" evidence="6">
    <location>
        <begin position="538"/>
        <end position="547"/>
    </location>
</feature>
<feature type="compositionally biased region" description="Polar residues" evidence="6">
    <location>
        <begin position="701"/>
        <end position="710"/>
    </location>
</feature>
<feature type="compositionally biased region" description="Polar residues" evidence="6">
    <location>
        <begin position="759"/>
        <end position="776"/>
    </location>
</feature>
<feature type="compositionally biased region" description="Polar residues" evidence="6">
    <location>
        <begin position="797"/>
        <end position="816"/>
    </location>
</feature>
<feature type="compositionally biased region" description="Polar residues" evidence="6">
    <location>
        <begin position="1244"/>
        <end position="1270"/>
    </location>
</feature>
<feature type="modified residue" description="Phosphothreonine" evidence="4">
    <location>
        <position position="186"/>
    </location>
</feature>
<feature type="modified residue" description="Phosphoserine" evidence="2">
    <location>
        <position position="386"/>
    </location>
</feature>
<feature type="modified residue" description="Phosphoserine" evidence="4">
    <location>
        <position position="399"/>
    </location>
</feature>
<feature type="modified residue" description="Phosphoserine" evidence="4">
    <location>
        <position position="443"/>
    </location>
</feature>
<feature type="modified residue" description="Phosphoserine" evidence="4">
    <location>
        <position position="629"/>
    </location>
</feature>
<feature type="modified residue" description="Phosphoserine" evidence="3">
    <location>
        <position position="1203"/>
    </location>
</feature>
<feature type="modified residue" description="Phosphoserine" evidence="4">
    <location>
        <position position="1224"/>
    </location>
</feature>
<feature type="modified residue" description="Phosphoserine" evidence="4">
    <location>
        <position position="1245"/>
    </location>
</feature>
<feature type="modified residue" description="Phosphoserine" evidence="2">
    <location>
        <position position="1255"/>
    </location>
</feature>
<feature type="modified residue" description="Phosphoserine" evidence="3">
    <location>
        <position position="1259"/>
    </location>
</feature>
<feature type="modified residue" description="Phosphoserine" evidence="2">
    <location>
        <position position="1261"/>
    </location>
</feature>
<feature type="modified residue" description="Phosphoserine" evidence="4">
    <location>
        <position position="1264"/>
    </location>
</feature>
<feature type="modified residue" description="Phosphoserine" evidence="4">
    <location>
        <position position="1268"/>
    </location>
</feature>